<gene>
    <name type="primary">dctA</name>
    <name type="ordered locus">STM3614</name>
</gene>
<name>DCTA_SALTY</name>
<proteinExistence type="inferred from homology"/>
<organism>
    <name type="scientific">Salmonella typhimurium (strain LT2 / SGSC1412 / ATCC 700720)</name>
    <dbReference type="NCBI Taxonomy" id="99287"/>
    <lineage>
        <taxon>Bacteria</taxon>
        <taxon>Pseudomonadati</taxon>
        <taxon>Pseudomonadota</taxon>
        <taxon>Gammaproteobacteria</taxon>
        <taxon>Enterobacterales</taxon>
        <taxon>Enterobacteriaceae</taxon>
        <taxon>Salmonella</taxon>
    </lineage>
</organism>
<keyword id="KW-0997">Cell inner membrane</keyword>
<keyword id="KW-1003">Cell membrane</keyword>
<keyword id="KW-0472">Membrane</keyword>
<keyword id="KW-1185">Reference proteome</keyword>
<keyword id="KW-0769">Symport</keyword>
<keyword id="KW-0812">Transmembrane</keyword>
<keyword id="KW-1133">Transmembrane helix</keyword>
<keyword id="KW-0813">Transport</keyword>
<accession>P50334</accession>
<reference key="1">
    <citation type="journal article" date="1996" name="J. Bacteriol.">
        <title>Utilization of orotate as a pyrimidine source by Salmonella typhimurium and Escherichia coli requires the dicarboxylate transport protein encoded by dctA.</title>
        <authorList>
            <person name="Baker K.E."/>
            <person name="Ditullio K.P."/>
            <person name="Neuhard J."/>
            <person name="Kelln R.A."/>
        </authorList>
    </citation>
    <scope>NUCLEOTIDE SEQUENCE [GENOMIC DNA]</scope>
    <source>
        <strain>LT2</strain>
    </source>
</reference>
<reference key="2">
    <citation type="journal article" date="2001" name="Nature">
        <title>Complete genome sequence of Salmonella enterica serovar Typhimurium LT2.</title>
        <authorList>
            <person name="McClelland M."/>
            <person name="Sanderson K.E."/>
            <person name="Spieth J."/>
            <person name="Clifton S.W."/>
            <person name="Latreille P."/>
            <person name="Courtney L."/>
            <person name="Porwollik S."/>
            <person name="Ali J."/>
            <person name="Dante M."/>
            <person name="Du F."/>
            <person name="Hou S."/>
            <person name="Layman D."/>
            <person name="Leonard S."/>
            <person name="Nguyen C."/>
            <person name="Scott K."/>
            <person name="Holmes A."/>
            <person name="Grewal N."/>
            <person name="Mulvaney E."/>
            <person name="Ryan E."/>
            <person name="Sun H."/>
            <person name="Florea L."/>
            <person name="Miller W."/>
            <person name="Stoneking T."/>
            <person name="Nhan M."/>
            <person name="Waterston R."/>
            <person name="Wilson R.K."/>
        </authorList>
    </citation>
    <scope>NUCLEOTIDE SEQUENCE [LARGE SCALE GENOMIC DNA]</scope>
    <source>
        <strain>LT2 / SGSC1412 / ATCC 700720</strain>
    </source>
</reference>
<dbReference type="EMBL" id="X91397">
    <property type="protein sequence ID" value="CAA62742.1"/>
    <property type="molecule type" value="Genomic_DNA"/>
</dbReference>
<dbReference type="EMBL" id="AE006468">
    <property type="protein sequence ID" value="AAL22474.1"/>
    <property type="molecule type" value="Genomic_DNA"/>
</dbReference>
<dbReference type="RefSeq" id="NP_462515.1">
    <property type="nucleotide sequence ID" value="NC_003197.2"/>
</dbReference>
<dbReference type="RefSeq" id="WP_000858228.1">
    <property type="nucleotide sequence ID" value="NC_003197.2"/>
</dbReference>
<dbReference type="SMR" id="P50334"/>
<dbReference type="STRING" id="99287.STM3614"/>
<dbReference type="PaxDb" id="99287-STM3614"/>
<dbReference type="GeneID" id="1255137"/>
<dbReference type="KEGG" id="stm:STM3614"/>
<dbReference type="PATRIC" id="fig|99287.12.peg.3820"/>
<dbReference type="HOGENOM" id="CLU_019375_7_0_6"/>
<dbReference type="OMA" id="TWTKEID"/>
<dbReference type="PhylomeDB" id="P50334"/>
<dbReference type="BioCyc" id="SENT99287:STM3614-MONOMER"/>
<dbReference type="Proteomes" id="UP000001014">
    <property type="component" value="Chromosome"/>
</dbReference>
<dbReference type="GO" id="GO:0005886">
    <property type="term" value="C:plasma membrane"/>
    <property type="evidence" value="ECO:0000318"/>
    <property type="project" value="GO_Central"/>
</dbReference>
<dbReference type="GO" id="GO:0015138">
    <property type="term" value="F:fumarate transmembrane transporter activity"/>
    <property type="evidence" value="ECO:0000318"/>
    <property type="project" value="GO_Central"/>
</dbReference>
<dbReference type="GO" id="GO:0015366">
    <property type="term" value="F:malate:proton symporter activity"/>
    <property type="evidence" value="ECO:0000318"/>
    <property type="project" value="GO_Central"/>
</dbReference>
<dbReference type="GO" id="GO:0015141">
    <property type="term" value="F:succinate transmembrane transporter activity"/>
    <property type="evidence" value="ECO:0000318"/>
    <property type="project" value="GO_Central"/>
</dbReference>
<dbReference type="GO" id="GO:0070778">
    <property type="term" value="P:L-aspartate transmembrane transport"/>
    <property type="evidence" value="ECO:0000318"/>
    <property type="project" value="GO_Central"/>
</dbReference>
<dbReference type="FunFam" id="1.10.3860.10:FF:000001">
    <property type="entry name" value="C4-dicarboxylate transport protein"/>
    <property type="match status" value="1"/>
</dbReference>
<dbReference type="Gene3D" id="1.10.3860.10">
    <property type="entry name" value="Sodium:dicarboxylate symporter"/>
    <property type="match status" value="1"/>
</dbReference>
<dbReference type="HAMAP" id="MF_01300">
    <property type="entry name" value="C4_dicarb_transport"/>
    <property type="match status" value="1"/>
</dbReference>
<dbReference type="InterPro" id="IPR023954">
    <property type="entry name" value="C4_dicarb_transport"/>
</dbReference>
<dbReference type="InterPro" id="IPR001991">
    <property type="entry name" value="Na-dicarboxylate_symporter"/>
</dbReference>
<dbReference type="InterPro" id="IPR018107">
    <property type="entry name" value="Na-dicarboxylate_symporter_CS"/>
</dbReference>
<dbReference type="InterPro" id="IPR036458">
    <property type="entry name" value="Na:dicarbo_symporter_sf"/>
</dbReference>
<dbReference type="NCBIfam" id="NF002461">
    <property type="entry name" value="PRK01663.1"/>
    <property type="match status" value="1"/>
</dbReference>
<dbReference type="NCBIfam" id="NF009587">
    <property type="entry name" value="PRK13027.1"/>
    <property type="match status" value="1"/>
</dbReference>
<dbReference type="PANTHER" id="PTHR42865:SF1">
    <property type="entry name" value="AEROBIC C4-DICARBOXYLATE TRANSPORT PROTEIN"/>
    <property type="match status" value="1"/>
</dbReference>
<dbReference type="PANTHER" id="PTHR42865">
    <property type="entry name" value="PROTON/GLUTAMATE-ASPARTATE SYMPORTER"/>
    <property type="match status" value="1"/>
</dbReference>
<dbReference type="Pfam" id="PF00375">
    <property type="entry name" value="SDF"/>
    <property type="match status" value="1"/>
</dbReference>
<dbReference type="PRINTS" id="PR00173">
    <property type="entry name" value="EDTRNSPORT"/>
</dbReference>
<dbReference type="SUPFAM" id="SSF118215">
    <property type="entry name" value="Proton glutamate symport protein"/>
    <property type="match status" value="1"/>
</dbReference>
<dbReference type="PROSITE" id="PS00713">
    <property type="entry name" value="NA_DICARBOXYL_SYMP_1"/>
    <property type="match status" value="1"/>
</dbReference>
<dbReference type="PROSITE" id="PS00714">
    <property type="entry name" value="NA_DICARBOXYL_SYMP_2"/>
    <property type="match status" value="1"/>
</dbReference>
<feature type="chain" id="PRO_0000202112" description="Aerobic C4-dicarboxylate transport protein">
    <location>
        <begin position="1"/>
        <end position="428"/>
    </location>
</feature>
<feature type="transmembrane region" description="Helical" evidence="2">
    <location>
        <begin position="5"/>
        <end position="27"/>
    </location>
</feature>
<feature type="transmembrane region" description="Helical" evidence="2">
    <location>
        <begin position="47"/>
        <end position="64"/>
    </location>
</feature>
<feature type="transmembrane region" description="Helical" evidence="2">
    <location>
        <begin position="77"/>
        <end position="99"/>
    </location>
</feature>
<feature type="transmembrane region" description="Helical" evidence="2">
    <location>
        <begin position="141"/>
        <end position="163"/>
    </location>
</feature>
<feature type="transmembrane region" description="Helical" evidence="2">
    <location>
        <begin position="184"/>
        <end position="206"/>
    </location>
</feature>
<feature type="transmembrane region" description="Helical" evidence="2">
    <location>
        <begin position="216"/>
        <end position="238"/>
    </location>
</feature>
<feature type="transmembrane region" description="Helical" evidence="2">
    <location>
        <begin position="289"/>
        <end position="311"/>
    </location>
</feature>
<feature type="transmembrane region" description="Helical" evidence="2">
    <location>
        <begin position="326"/>
        <end position="348"/>
    </location>
</feature>
<feature type="transmembrane region" description="Helical" evidence="2">
    <location>
        <begin position="353"/>
        <end position="375"/>
    </location>
</feature>
<comment type="function">
    <text evidence="1">Responsible for the transport of dicarboxylates such as succinate, fumarate, and malate from the periplasm across the inner membrane.</text>
</comment>
<comment type="subcellular location">
    <subcellularLocation>
        <location>Cell inner membrane</location>
        <topology>Multi-pass membrane protein</topology>
    </subcellularLocation>
</comment>
<comment type="similarity">
    <text evidence="3">Belongs to the dicarboxylate/amino acid:cation symporter (DAACS) (TC 2.A.23) family.</text>
</comment>
<protein>
    <recommendedName>
        <fullName>Aerobic C4-dicarboxylate transport protein</fullName>
    </recommendedName>
</protein>
<sequence>MKTSLFKSLYFQVLTAIAIGILLGHYYPELGAQMKPLGDAFVKLIKMIIAPVIFCTVVTGIAGMESMKAVGRTGAVALLYFEIVSTIALIIGLIIVNVVQPGAGMNVDPATLDAQAVAVYAAQAKEQGIIAFLMDVIPGSVIGAFASGNILQVLLFAVLFGFALHRLGSKGQLIFNVIESFSQVIFGIINMIMRLAPIGAFGAMAFTIGKYGVGSLVQLGQLIICFYITCILFVVVVLGTIARVTGFSIFKFIRYIREELLIVLGTSSSESALPRMLDKMEKLGCRKSVVGLVIPTGYSFNLDGTSIYLTMAAVFIAQATNSHMDIFHQITLLVVLLLSSKGAAGVTGSGFIVLAATISAVGHLPVAGLALILGIDRFMSEARALTNLVGNGVATVVVAKWVKELDHQKLDDVLNNRAPDGKTHEISS</sequence>
<evidence type="ECO:0000250" key="1"/>
<evidence type="ECO:0000255" key="2"/>
<evidence type="ECO:0000305" key="3"/>